<feature type="chain" id="PRO_0000294241" description="ATPase SWSAP1">
    <location>
        <begin position="1"/>
        <end position="278"/>
    </location>
</feature>
<feature type="region of interest" description="Disordered" evidence="2">
    <location>
        <begin position="237"/>
        <end position="278"/>
    </location>
</feature>
<feature type="compositionally biased region" description="Polar residues" evidence="2">
    <location>
        <begin position="269"/>
        <end position="278"/>
    </location>
</feature>
<feature type="sequence conflict" description="In Ref. 1; BAB26550." evidence="3" ref="1">
    <original>P</original>
    <variation>S</variation>
    <location>
        <position position="263"/>
    </location>
</feature>
<evidence type="ECO:0000250" key="1"/>
<evidence type="ECO:0000256" key="2">
    <source>
        <dbReference type="SAM" id="MobiDB-lite"/>
    </source>
</evidence>
<evidence type="ECO:0000305" key="3"/>
<reference key="1">
    <citation type="journal article" date="2005" name="Science">
        <title>The transcriptional landscape of the mammalian genome.</title>
        <authorList>
            <person name="Carninci P."/>
            <person name="Kasukawa T."/>
            <person name="Katayama S."/>
            <person name="Gough J."/>
            <person name="Frith M.C."/>
            <person name="Maeda N."/>
            <person name="Oyama R."/>
            <person name="Ravasi T."/>
            <person name="Lenhard B."/>
            <person name="Wells C."/>
            <person name="Kodzius R."/>
            <person name="Shimokawa K."/>
            <person name="Bajic V.B."/>
            <person name="Brenner S.E."/>
            <person name="Batalov S."/>
            <person name="Forrest A.R."/>
            <person name="Zavolan M."/>
            <person name="Davis M.J."/>
            <person name="Wilming L.G."/>
            <person name="Aidinis V."/>
            <person name="Allen J.E."/>
            <person name="Ambesi-Impiombato A."/>
            <person name="Apweiler R."/>
            <person name="Aturaliya R.N."/>
            <person name="Bailey T.L."/>
            <person name="Bansal M."/>
            <person name="Baxter L."/>
            <person name="Beisel K.W."/>
            <person name="Bersano T."/>
            <person name="Bono H."/>
            <person name="Chalk A.M."/>
            <person name="Chiu K.P."/>
            <person name="Choudhary V."/>
            <person name="Christoffels A."/>
            <person name="Clutterbuck D.R."/>
            <person name="Crowe M.L."/>
            <person name="Dalla E."/>
            <person name="Dalrymple B.P."/>
            <person name="de Bono B."/>
            <person name="Della Gatta G."/>
            <person name="di Bernardo D."/>
            <person name="Down T."/>
            <person name="Engstrom P."/>
            <person name="Fagiolini M."/>
            <person name="Faulkner G."/>
            <person name="Fletcher C.F."/>
            <person name="Fukushima T."/>
            <person name="Furuno M."/>
            <person name="Futaki S."/>
            <person name="Gariboldi M."/>
            <person name="Georgii-Hemming P."/>
            <person name="Gingeras T.R."/>
            <person name="Gojobori T."/>
            <person name="Green R.E."/>
            <person name="Gustincich S."/>
            <person name="Harbers M."/>
            <person name="Hayashi Y."/>
            <person name="Hensch T.K."/>
            <person name="Hirokawa N."/>
            <person name="Hill D."/>
            <person name="Huminiecki L."/>
            <person name="Iacono M."/>
            <person name="Ikeo K."/>
            <person name="Iwama A."/>
            <person name="Ishikawa T."/>
            <person name="Jakt M."/>
            <person name="Kanapin A."/>
            <person name="Katoh M."/>
            <person name="Kawasawa Y."/>
            <person name="Kelso J."/>
            <person name="Kitamura H."/>
            <person name="Kitano H."/>
            <person name="Kollias G."/>
            <person name="Krishnan S.P."/>
            <person name="Kruger A."/>
            <person name="Kummerfeld S.K."/>
            <person name="Kurochkin I.V."/>
            <person name="Lareau L.F."/>
            <person name="Lazarevic D."/>
            <person name="Lipovich L."/>
            <person name="Liu J."/>
            <person name="Liuni S."/>
            <person name="McWilliam S."/>
            <person name="Madan Babu M."/>
            <person name="Madera M."/>
            <person name="Marchionni L."/>
            <person name="Matsuda H."/>
            <person name="Matsuzawa S."/>
            <person name="Miki H."/>
            <person name="Mignone F."/>
            <person name="Miyake S."/>
            <person name="Morris K."/>
            <person name="Mottagui-Tabar S."/>
            <person name="Mulder N."/>
            <person name="Nakano N."/>
            <person name="Nakauchi H."/>
            <person name="Ng P."/>
            <person name="Nilsson R."/>
            <person name="Nishiguchi S."/>
            <person name="Nishikawa S."/>
            <person name="Nori F."/>
            <person name="Ohara O."/>
            <person name="Okazaki Y."/>
            <person name="Orlando V."/>
            <person name="Pang K.C."/>
            <person name="Pavan W.J."/>
            <person name="Pavesi G."/>
            <person name="Pesole G."/>
            <person name="Petrovsky N."/>
            <person name="Piazza S."/>
            <person name="Reed J."/>
            <person name="Reid J.F."/>
            <person name="Ring B.Z."/>
            <person name="Ringwald M."/>
            <person name="Rost B."/>
            <person name="Ruan Y."/>
            <person name="Salzberg S.L."/>
            <person name="Sandelin A."/>
            <person name="Schneider C."/>
            <person name="Schoenbach C."/>
            <person name="Sekiguchi K."/>
            <person name="Semple C.A."/>
            <person name="Seno S."/>
            <person name="Sessa L."/>
            <person name="Sheng Y."/>
            <person name="Shibata Y."/>
            <person name="Shimada H."/>
            <person name="Shimada K."/>
            <person name="Silva D."/>
            <person name="Sinclair B."/>
            <person name="Sperling S."/>
            <person name="Stupka E."/>
            <person name="Sugiura K."/>
            <person name="Sultana R."/>
            <person name="Takenaka Y."/>
            <person name="Taki K."/>
            <person name="Tammoja K."/>
            <person name="Tan S.L."/>
            <person name="Tang S."/>
            <person name="Taylor M.S."/>
            <person name="Tegner J."/>
            <person name="Teichmann S.A."/>
            <person name="Ueda H.R."/>
            <person name="van Nimwegen E."/>
            <person name="Verardo R."/>
            <person name="Wei C.L."/>
            <person name="Yagi K."/>
            <person name="Yamanishi H."/>
            <person name="Zabarovsky E."/>
            <person name="Zhu S."/>
            <person name="Zimmer A."/>
            <person name="Hide W."/>
            <person name="Bult C."/>
            <person name="Grimmond S.M."/>
            <person name="Teasdale R.D."/>
            <person name="Liu E.T."/>
            <person name="Brusic V."/>
            <person name="Quackenbush J."/>
            <person name="Wahlestedt C."/>
            <person name="Mattick J.S."/>
            <person name="Hume D.A."/>
            <person name="Kai C."/>
            <person name="Sasaki D."/>
            <person name="Tomaru Y."/>
            <person name="Fukuda S."/>
            <person name="Kanamori-Katayama M."/>
            <person name="Suzuki M."/>
            <person name="Aoki J."/>
            <person name="Arakawa T."/>
            <person name="Iida J."/>
            <person name="Imamura K."/>
            <person name="Itoh M."/>
            <person name="Kato T."/>
            <person name="Kawaji H."/>
            <person name="Kawagashira N."/>
            <person name="Kawashima T."/>
            <person name="Kojima M."/>
            <person name="Kondo S."/>
            <person name="Konno H."/>
            <person name="Nakano K."/>
            <person name="Ninomiya N."/>
            <person name="Nishio T."/>
            <person name="Okada M."/>
            <person name="Plessy C."/>
            <person name="Shibata K."/>
            <person name="Shiraki T."/>
            <person name="Suzuki S."/>
            <person name="Tagami M."/>
            <person name="Waki K."/>
            <person name="Watahiki A."/>
            <person name="Okamura-Oho Y."/>
            <person name="Suzuki H."/>
            <person name="Kawai J."/>
            <person name="Hayashizaki Y."/>
        </authorList>
    </citation>
    <scope>NUCLEOTIDE SEQUENCE [LARGE SCALE MRNA]</scope>
    <source>
        <strain>C57BL/6J</strain>
        <tissue>Brain cortex</tissue>
        <tissue>Tongue</tissue>
    </source>
</reference>
<reference key="2">
    <citation type="journal article" date="2004" name="Genome Res.">
        <title>The status, quality, and expansion of the NIH full-length cDNA project: the Mammalian Gene Collection (MGC).</title>
        <authorList>
            <consortium name="The MGC Project Team"/>
        </authorList>
    </citation>
    <scope>NUCLEOTIDE SEQUENCE [LARGE SCALE MRNA]</scope>
    <source>
        <strain>FVB/N</strain>
        <tissue>Liver</tissue>
    </source>
</reference>
<sequence>MAEALRRVLNAGCAARPGEDGAAGPPLLLLGAPRSAQTSLLFAAALEAAGEGRGSVLFVTRRPLQSLPLSTPTAREHWRLQKVRFQYPSSIQELLQLLASAHEAPAPTPSLLLLDGLEEYLAEDPSAQEAAYLAALLLDTAAFFSHRLGANGSCGLVVALETQKEAEADAPHLPLLKRYFPAQCWLQPDALGLGQHCCLRASLELGKLSPRTEWSVSFLPCGEMKVTPWLAQASKLSPEKKDSSAGSQSLTLGCDNLPGPGSPLDGILTSETGADSKT</sequence>
<name>SWAP1_MOUSE</name>
<accession>Q8VCI7</accession>
<accession>A7E2S1</accession>
<accession>Q8BRM3</accession>
<accession>Q9CV33</accession>
<keyword id="KW-0227">DNA damage</keyword>
<keyword id="KW-0233">DNA recombination</keyword>
<keyword id="KW-0234">DNA repair</keyword>
<keyword id="KW-0238">DNA-binding</keyword>
<keyword id="KW-0539">Nucleus</keyword>
<keyword id="KW-1185">Reference proteome</keyword>
<comment type="function">
    <text evidence="1">ATPase which is preferentially stimulated by single-stranded DNA and is involved in homologous recombination repair (HRR). Has a DNA-binding activity which is independent of its ATPase activity (By similarity).</text>
</comment>
<comment type="subunit">
    <text evidence="1">Interacts with ZSWIM7; they form a functional complex involved in homologous recombination repair and stabilize each other. Interacts with RAD51, RAD51B, RAD51C, RAD51D and XRCC3; involved in homologous recombination repair (By similarity).</text>
</comment>
<comment type="subcellular location">
    <subcellularLocation>
        <location evidence="3">Nucleus</location>
    </subcellularLocation>
</comment>
<comment type="sequence caution" evidence="3">
    <conflict type="erroneous initiation">
        <sequence resource="EMBL-CDS" id="BAB26550"/>
    </conflict>
    <text>Extended N-terminus.</text>
</comment>
<dbReference type="EMBL" id="AK009864">
    <property type="protein sequence ID" value="BAB26550.1"/>
    <property type="status" value="ALT_INIT"/>
    <property type="molecule type" value="mRNA"/>
</dbReference>
<dbReference type="EMBL" id="AK043948">
    <property type="protein sequence ID" value="BAC31710.1"/>
    <property type="molecule type" value="mRNA"/>
</dbReference>
<dbReference type="EMBL" id="CJ185887">
    <property type="status" value="NOT_ANNOTATED_CDS"/>
    <property type="molecule type" value="mRNA"/>
</dbReference>
<dbReference type="EMBL" id="BC019749">
    <property type="protein sequence ID" value="AAH19749.1"/>
    <property type="molecule type" value="mRNA"/>
</dbReference>
<dbReference type="EMBL" id="BC150493">
    <property type="protein sequence ID" value="AAI50494.1"/>
    <property type="molecule type" value="mRNA"/>
</dbReference>
<dbReference type="CCDS" id="CCDS52739.1"/>
<dbReference type="RefSeq" id="NP_080146.1">
    <property type="nucleotide sequence ID" value="NM_025870.1"/>
</dbReference>
<dbReference type="FunCoup" id="Q8VCI7">
    <property type="interactions" value="20"/>
</dbReference>
<dbReference type="STRING" id="10090.ENSMUSP00000060331"/>
<dbReference type="GlyGen" id="Q8VCI7">
    <property type="glycosylation" value="1 site"/>
</dbReference>
<dbReference type="iPTMnet" id="Q8VCI7"/>
<dbReference type="PhosphoSitePlus" id="Q8VCI7"/>
<dbReference type="jPOST" id="Q8VCI7"/>
<dbReference type="PaxDb" id="10090-ENSMUSP00000060331"/>
<dbReference type="ProteomicsDB" id="257107"/>
<dbReference type="Pumba" id="Q8VCI7"/>
<dbReference type="Antibodypedia" id="53827">
    <property type="antibodies" value="57 antibodies from 13 providers"/>
</dbReference>
<dbReference type="Ensembl" id="ENSMUST00000053583.7">
    <property type="protein sequence ID" value="ENSMUSP00000060331.6"/>
    <property type="gene ID" value="ENSMUSG00000051238.7"/>
</dbReference>
<dbReference type="GeneID" id="66962"/>
<dbReference type="KEGG" id="mmu:66962"/>
<dbReference type="UCSC" id="uc009onc.2">
    <property type="organism name" value="mouse"/>
</dbReference>
<dbReference type="AGR" id="MGI:1914212"/>
<dbReference type="CTD" id="126074"/>
<dbReference type="MGI" id="MGI:1914212">
    <property type="gene designation" value="Swsap1"/>
</dbReference>
<dbReference type="VEuPathDB" id="HostDB:ENSMUSG00000051238"/>
<dbReference type="eggNOG" id="ENOG502S62D">
    <property type="taxonomic scope" value="Eukaryota"/>
</dbReference>
<dbReference type="GeneTree" id="ENSGT00390000007170"/>
<dbReference type="HOGENOM" id="CLU_099283_0_0_1"/>
<dbReference type="InParanoid" id="Q8VCI7"/>
<dbReference type="OMA" id="EMTITPW"/>
<dbReference type="OrthoDB" id="67296at2759"/>
<dbReference type="PhylomeDB" id="Q8VCI7"/>
<dbReference type="TreeFam" id="TF337313"/>
<dbReference type="BioGRID-ORCS" id="66962">
    <property type="hits" value="6 hits in 114 CRISPR screens"/>
</dbReference>
<dbReference type="ChiTaRS" id="Swsap1">
    <property type="organism name" value="mouse"/>
</dbReference>
<dbReference type="PRO" id="PR:Q8VCI7"/>
<dbReference type="Proteomes" id="UP000000589">
    <property type="component" value="Chromosome 9"/>
</dbReference>
<dbReference type="RNAct" id="Q8VCI7">
    <property type="molecule type" value="protein"/>
</dbReference>
<dbReference type="Bgee" id="ENSMUSG00000051238">
    <property type="expression patterns" value="Expressed in retinal neural layer and 214 other cell types or tissues"/>
</dbReference>
<dbReference type="GO" id="GO:0005634">
    <property type="term" value="C:nucleus"/>
    <property type="evidence" value="ECO:0007669"/>
    <property type="project" value="UniProtKB-SubCell"/>
</dbReference>
<dbReference type="GO" id="GO:0016887">
    <property type="term" value="F:ATP hydrolysis activity"/>
    <property type="evidence" value="ECO:0000250"/>
    <property type="project" value="UniProtKB"/>
</dbReference>
<dbReference type="GO" id="GO:0003697">
    <property type="term" value="F:single-stranded DNA binding"/>
    <property type="evidence" value="ECO:0000250"/>
    <property type="project" value="UniProtKB"/>
</dbReference>
<dbReference type="GO" id="GO:0000724">
    <property type="term" value="P:double-strand break repair via homologous recombination"/>
    <property type="evidence" value="ECO:0000250"/>
    <property type="project" value="UniProtKB"/>
</dbReference>
<dbReference type="GO" id="GO:0050821">
    <property type="term" value="P:protein stabilization"/>
    <property type="evidence" value="ECO:0000250"/>
    <property type="project" value="UniProtKB"/>
</dbReference>
<dbReference type="PANTHER" id="PTHR28653">
    <property type="match status" value="1"/>
</dbReference>
<dbReference type="PANTHER" id="PTHR28653:SF1">
    <property type="entry name" value="ATPASE SWSAP1"/>
    <property type="match status" value="1"/>
</dbReference>
<organism>
    <name type="scientific">Mus musculus</name>
    <name type="common">Mouse</name>
    <dbReference type="NCBI Taxonomy" id="10090"/>
    <lineage>
        <taxon>Eukaryota</taxon>
        <taxon>Metazoa</taxon>
        <taxon>Chordata</taxon>
        <taxon>Craniata</taxon>
        <taxon>Vertebrata</taxon>
        <taxon>Euteleostomi</taxon>
        <taxon>Mammalia</taxon>
        <taxon>Eutheria</taxon>
        <taxon>Euarchontoglires</taxon>
        <taxon>Glires</taxon>
        <taxon>Rodentia</taxon>
        <taxon>Myomorpha</taxon>
        <taxon>Muroidea</taxon>
        <taxon>Muridae</taxon>
        <taxon>Murinae</taxon>
        <taxon>Mus</taxon>
        <taxon>Mus</taxon>
    </lineage>
</organism>
<gene>
    <name type="primary">Swsap1</name>
</gene>
<proteinExistence type="evidence at transcript level"/>
<protein>
    <recommendedName>
        <fullName>ATPase SWSAP1</fullName>
    </recommendedName>
</protein>